<reference evidence="6" key="1">
    <citation type="journal article" date="1998" name="Science">
        <title>Genome sequence of the nematode C. elegans: a platform for investigating biology.</title>
        <authorList>
            <consortium name="The C. elegans sequencing consortium"/>
        </authorList>
    </citation>
    <scope>NUCLEOTIDE SEQUENCE [LARGE SCALE GENOMIC DNA]</scope>
    <source>
        <strain evidence="6">Bristol N2</strain>
    </source>
</reference>
<reference evidence="5" key="2">
    <citation type="journal article" date="2005" name="Development">
        <title>Specification of muscle neurotransmitter sensitivity by a Paired-like homeodomain protein in Caenorhabditis elegans.</title>
        <authorList>
            <person name="Branicky R."/>
            <person name="Hekimi S."/>
        </authorList>
    </citation>
    <scope>FUNCTION</scope>
    <scope>SUBCELLULAR LOCATION</scope>
    <scope>TISSUE SPECIFICITY</scope>
    <scope>DISRUPTION PHENOTYPE</scope>
    <scope>MUTAGENESIS OF ARG-232</scope>
</reference>
<protein>
    <recommendedName>
        <fullName evidence="4">Homeobox protein dsc-1</fullName>
    </recommendedName>
    <alternativeName>
        <fullName evidence="4">Defecation suppressor of clk-1</fullName>
    </alternativeName>
</protein>
<accession>Q93246</accession>
<evidence type="ECO:0000255" key="1">
    <source>
        <dbReference type="PROSITE-ProRule" id="PRU00108"/>
    </source>
</evidence>
<evidence type="ECO:0000256" key="2">
    <source>
        <dbReference type="SAM" id="MobiDB-lite"/>
    </source>
</evidence>
<evidence type="ECO:0000269" key="3">
    <source>
    </source>
</evidence>
<evidence type="ECO:0000303" key="4">
    <source>
    </source>
</evidence>
<evidence type="ECO:0000305" key="5"/>
<evidence type="ECO:0000312" key="6">
    <source>
        <dbReference type="EMBL" id="CAA20928.1"/>
    </source>
</evidence>
<evidence type="ECO:0000312" key="7">
    <source>
        <dbReference type="WormBase" id="C18B12.3"/>
    </source>
</evidence>
<gene>
    <name evidence="6 7" type="primary">dsc-1</name>
    <name type="ORF">C18B12.3</name>
</gene>
<sequence length="310" mass="35309">MNPHTNLNNVFDFPDLPMLLPKSEALSVTTDFSVPPVQQGAQQFHPPRNLGPQLARRWSCGDSQHADEPPASYYHNLGVALHNHFQMSNQHYLSDFDCPTTVSPISSAHETGQLPQLSPYDHIGNQDPHMFSPHAYGNSMIPDNSYFENASRSISAPNVGNSTLNPSLMSSDNAQSCGGRRRFRTNFTELQSTFLEDSFKESHYPDHKAKKYMADFLKIPEDRITVWFQNRRAKWRRKEHRQRDRTRNESFSGGSNSFDFACFSAQHPDDGPNAKHPNSFGIPNQPMSLDQFPMNTEQDFPEFPSLQEHQ</sequence>
<comment type="function">
    <text evidence="3">Transcriptional regulator which plays a role in the expulsion step of defecation by controlling enteric muscle-specific expression of exp-1 which is required for enteric muscle contraction. Not required for exp-1 expression in the PDA neuron. Also involved in controlling the length of the defecation cycle.</text>
</comment>
<comment type="subcellular location">
    <subcellularLocation>
        <location evidence="1 3">Nucleus</location>
    </subcellularLocation>
    <subcellularLocation>
        <location evidence="3">Cell projection</location>
        <location evidence="3">Axon</location>
    </subcellularLocation>
    <subcellularLocation>
        <location evidence="3">Cytoplasm</location>
    </subcellularLocation>
</comment>
<comment type="tissue specificity">
    <text evidence="3">Expressed in the bilateral sensory neurons AWA, AWB, AWC, ASE, FLP and PVD. Also expressed in the enteric intestinal and anal depressor muscles.</text>
</comment>
<comment type="disruption phenotype">
    <text evidence="3">Shortened defecation cycle length with change in periodicity of the cycle. Expulsion defective with distended gut and lack of enteric muscle contractions due to lack of exp-1 expression.</text>
</comment>
<organism>
    <name type="scientific">Caenorhabditis elegans</name>
    <dbReference type="NCBI Taxonomy" id="6239"/>
    <lineage>
        <taxon>Eukaryota</taxon>
        <taxon>Metazoa</taxon>
        <taxon>Ecdysozoa</taxon>
        <taxon>Nematoda</taxon>
        <taxon>Chromadorea</taxon>
        <taxon>Rhabditida</taxon>
        <taxon>Rhabditina</taxon>
        <taxon>Rhabditomorpha</taxon>
        <taxon>Rhabditoidea</taxon>
        <taxon>Rhabditidae</taxon>
        <taxon>Peloderinae</taxon>
        <taxon>Caenorhabditis</taxon>
    </lineage>
</organism>
<name>DFSC1_CAEEL</name>
<proteinExistence type="evidence at protein level"/>
<feature type="chain" id="PRO_0000423537" description="Homeobox protein dsc-1">
    <location>
        <begin position="1"/>
        <end position="310"/>
    </location>
</feature>
<feature type="DNA-binding region" description="Homeobox" evidence="1">
    <location>
        <begin position="180"/>
        <end position="239"/>
    </location>
</feature>
<feature type="region of interest" description="Disordered" evidence="2">
    <location>
        <begin position="262"/>
        <end position="310"/>
    </location>
</feature>
<feature type="compositionally biased region" description="Polar residues" evidence="2">
    <location>
        <begin position="281"/>
        <end position="298"/>
    </location>
</feature>
<feature type="mutagenesis site" description="In qm133; shortened defecation cycle length and lack of enteric muscle contractions." evidence="3">
    <original>R</original>
    <variation>H</variation>
    <location>
        <position position="232"/>
    </location>
</feature>
<keyword id="KW-0966">Cell projection</keyword>
<keyword id="KW-0963">Cytoplasm</keyword>
<keyword id="KW-0221">Differentiation</keyword>
<keyword id="KW-0238">DNA-binding</keyword>
<keyword id="KW-0371">Homeobox</keyword>
<keyword id="KW-0539">Nucleus</keyword>
<keyword id="KW-1185">Reference proteome</keyword>
<keyword id="KW-0804">Transcription</keyword>
<keyword id="KW-0805">Transcription regulation</keyword>
<dbReference type="EMBL" id="AL031620">
    <property type="protein sequence ID" value="CAA20928.1"/>
    <property type="molecule type" value="Genomic_DNA"/>
</dbReference>
<dbReference type="PIR" id="T19379">
    <property type="entry name" value="T19379"/>
</dbReference>
<dbReference type="RefSeq" id="NP_510497.1">
    <property type="nucleotide sequence ID" value="NM_078096.4"/>
</dbReference>
<dbReference type="SMR" id="Q93246"/>
<dbReference type="BioGRID" id="46496">
    <property type="interactions" value="2"/>
</dbReference>
<dbReference type="FunCoup" id="Q93246">
    <property type="interactions" value="21"/>
</dbReference>
<dbReference type="IntAct" id="Q93246">
    <property type="interactions" value="1"/>
</dbReference>
<dbReference type="STRING" id="6239.C18B12.3.1"/>
<dbReference type="PaxDb" id="6239-C18B12.3"/>
<dbReference type="EnsemblMetazoa" id="C18B12.3.1">
    <property type="protein sequence ID" value="C18B12.3.1"/>
    <property type="gene ID" value="WBGene00001096"/>
</dbReference>
<dbReference type="EnsemblMetazoa" id="C18B12.3.2">
    <property type="protein sequence ID" value="C18B12.3.2"/>
    <property type="gene ID" value="WBGene00001096"/>
</dbReference>
<dbReference type="GeneID" id="181599"/>
<dbReference type="KEGG" id="cel:CELE_C18B12.3"/>
<dbReference type="UCSC" id="C18B12.3">
    <property type="organism name" value="c. elegans"/>
</dbReference>
<dbReference type="AGR" id="WB:WBGene00001096"/>
<dbReference type="CTD" id="181599"/>
<dbReference type="WormBase" id="C18B12.3">
    <property type="protein sequence ID" value="CE08308"/>
    <property type="gene ID" value="WBGene00001096"/>
    <property type="gene designation" value="dsc-1"/>
</dbReference>
<dbReference type="eggNOG" id="KOG0494">
    <property type="taxonomic scope" value="Eukaryota"/>
</dbReference>
<dbReference type="GeneTree" id="ENSGT00940000160793"/>
<dbReference type="HOGENOM" id="CLU_909838_0_0_1"/>
<dbReference type="InParanoid" id="Q93246"/>
<dbReference type="OMA" id="PASYYHN"/>
<dbReference type="OrthoDB" id="6159439at2759"/>
<dbReference type="PhylomeDB" id="Q93246"/>
<dbReference type="PRO" id="PR:Q93246"/>
<dbReference type="Proteomes" id="UP000001940">
    <property type="component" value="Chromosome X"/>
</dbReference>
<dbReference type="Bgee" id="WBGene00001096">
    <property type="expression patterns" value="Expressed in larva and 1 other cell type or tissue"/>
</dbReference>
<dbReference type="GO" id="GO:0030424">
    <property type="term" value="C:axon"/>
    <property type="evidence" value="ECO:0007669"/>
    <property type="project" value="UniProtKB-SubCell"/>
</dbReference>
<dbReference type="GO" id="GO:0042995">
    <property type="term" value="C:cell projection"/>
    <property type="evidence" value="ECO:0000314"/>
    <property type="project" value="UniProtKB"/>
</dbReference>
<dbReference type="GO" id="GO:0005737">
    <property type="term" value="C:cytoplasm"/>
    <property type="evidence" value="ECO:0000314"/>
    <property type="project" value="UniProtKB"/>
</dbReference>
<dbReference type="GO" id="GO:0005634">
    <property type="term" value="C:nucleus"/>
    <property type="evidence" value="ECO:0000314"/>
    <property type="project" value="UniProtKB"/>
</dbReference>
<dbReference type="GO" id="GO:0000981">
    <property type="term" value="F:DNA-binding transcription factor activity, RNA polymerase II-specific"/>
    <property type="evidence" value="ECO:0000318"/>
    <property type="project" value="GO_Central"/>
</dbReference>
<dbReference type="GO" id="GO:0000977">
    <property type="term" value="F:RNA polymerase II transcription regulatory region sequence-specific DNA binding"/>
    <property type="evidence" value="ECO:0000318"/>
    <property type="project" value="GO_Central"/>
</dbReference>
<dbReference type="GO" id="GO:0030154">
    <property type="term" value="P:cell differentiation"/>
    <property type="evidence" value="ECO:0007669"/>
    <property type="project" value="UniProtKB-KW"/>
</dbReference>
<dbReference type="GO" id="GO:2000748">
    <property type="term" value="P:positive regulation of defecation rhythm"/>
    <property type="evidence" value="ECO:0000315"/>
    <property type="project" value="UniProtKB"/>
</dbReference>
<dbReference type="GO" id="GO:0006355">
    <property type="term" value="P:regulation of DNA-templated transcription"/>
    <property type="evidence" value="ECO:0000314"/>
    <property type="project" value="UniProtKB"/>
</dbReference>
<dbReference type="GO" id="GO:0006357">
    <property type="term" value="P:regulation of transcription by RNA polymerase II"/>
    <property type="evidence" value="ECO:0000318"/>
    <property type="project" value="GO_Central"/>
</dbReference>
<dbReference type="CDD" id="cd00086">
    <property type="entry name" value="homeodomain"/>
    <property type="match status" value="1"/>
</dbReference>
<dbReference type="FunFam" id="1.10.10.60:FF:000777">
    <property type="entry name" value="Homeobox protein dsc-1"/>
    <property type="match status" value="1"/>
</dbReference>
<dbReference type="Gene3D" id="1.10.10.60">
    <property type="entry name" value="Homeodomain-like"/>
    <property type="match status" value="1"/>
</dbReference>
<dbReference type="InterPro" id="IPR001356">
    <property type="entry name" value="HD"/>
</dbReference>
<dbReference type="InterPro" id="IPR017970">
    <property type="entry name" value="Homeobox_CS"/>
</dbReference>
<dbReference type="InterPro" id="IPR009057">
    <property type="entry name" value="Homeodomain-like_sf"/>
</dbReference>
<dbReference type="InterPro" id="IPR050649">
    <property type="entry name" value="Paired_Homeobox_TFs"/>
</dbReference>
<dbReference type="PANTHER" id="PTHR24329">
    <property type="entry name" value="HOMEOBOX PROTEIN ARISTALESS"/>
    <property type="match status" value="1"/>
</dbReference>
<dbReference type="PANTHER" id="PTHR24329:SF556">
    <property type="entry name" value="HOMEOBOX PROTEIN DSC-1"/>
    <property type="match status" value="1"/>
</dbReference>
<dbReference type="Pfam" id="PF00046">
    <property type="entry name" value="Homeodomain"/>
    <property type="match status" value="1"/>
</dbReference>
<dbReference type="SMART" id="SM00389">
    <property type="entry name" value="HOX"/>
    <property type="match status" value="1"/>
</dbReference>
<dbReference type="SUPFAM" id="SSF46689">
    <property type="entry name" value="Homeodomain-like"/>
    <property type="match status" value="1"/>
</dbReference>
<dbReference type="PROSITE" id="PS00027">
    <property type="entry name" value="HOMEOBOX_1"/>
    <property type="match status" value="1"/>
</dbReference>
<dbReference type="PROSITE" id="PS50071">
    <property type="entry name" value="HOMEOBOX_2"/>
    <property type="match status" value="1"/>
</dbReference>